<comment type="function">
    <text evidence="1">Catalyzes the methylthiolation of N6-(dimethylallyl)adenosine (i(6)A), leading to the formation of 2-methylthio-N6-(dimethylallyl)adenosine (ms(2)i(6)A) at position 37 in tRNAs that read codons beginning with uridine.</text>
</comment>
<comment type="catalytic activity">
    <reaction evidence="1">
        <text>N(6)-dimethylallyladenosine(37) in tRNA + (sulfur carrier)-SH + AH2 + 2 S-adenosyl-L-methionine = 2-methylsulfanyl-N(6)-dimethylallyladenosine(37) in tRNA + (sulfur carrier)-H + 5'-deoxyadenosine + L-methionine + A + S-adenosyl-L-homocysteine + 2 H(+)</text>
        <dbReference type="Rhea" id="RHEA:37067"/>
        <dbReference type="Rhea" id="RHEA-COMP:10375"/>
        <dbReference type="Rhea" id="RHEA-COMP:10376"/>
        <dbReference type="Rhea" id="RHEA-COMP:14737"/>
        <dbReference type="Rhea" id="RHEA-COMP:14739"/>
        <dbReference type="ChEBI" id="CHEBI:13193"/>
        <dbReference type="ChEBI" id="CHEBI:15378"/>
        <dbReference type="ChEBI" id="CHEBI:17319"/>
        <dbReference type="ChEBI" id="CHEBI:17499"/>
        <dbReference type="ChEBI" id="CHEBI:29917"/>
        <dbReference type="ChEBI" id="CHEBI:57844"/>
        <dbReference type="ChEBI" id="CHEBI:57856"/>
        <dbReference type="ChEBI" id="CHEBI:59789"/>
        <dbReference type="ChEBI" id="CHEBI:64428"/>
        <dbReference type="ChEBI" id="CHEBI:74415"/>
        <dbReference type="ChEBI" id="CHEBI:74417"/>
        <dbReference type="EC" id="2.8.4.3"/>
    </reaction>
</comment>
<comment type="cofactor">
    <cofactor evidence="1">
        <name>[4Fe-4S] cluster</name>
        <dbReference type="ChEBI" id="CHEBI:49883"/>
    </cofactor>
    <text evidence="1">Binds 2 [4Fe-4S] clusters. One cluster is coordinated with 3 cysteines and an exchangeable S-adenosyl-L-methionine.</text>
</comment>
<comment type="subunit">
    <text evidence="1">Monomer.</text>
</comment>
<comment type="subcellular location">
    <subcellularLocation>
        <location evidence="1">Cytoplasm</location>
    </subcellularLocation>
</comment>
<comment type="similarity">
    <text evidence="1">Belongs to the methylthiotransferase family. MiaB subfamily.</text>
</comment>
<dbReference type="EC" id="2.8.4.3" evidence="1"/>
<dbReference type="EMBL" id="CP000890">
    <property type="protein sequence ID" value="ABX78102.1"/>
    <property type="molecule type" value="Genomic_DNA"/>
</dbReference>
<dbReference type="RefSeq" id="WP_005771098.1">
    <property type="nucleotide sequence ID" value="NC_010117.1"/>
</dbReference>
<dbReference type="SMR" id="A9NC58"/>
<dbReference type="KEGG" id="cbs:COXBURSA331_A0683"/>
<dbReference type="HOGENOM" id="CLU_018697_2_0_6"/>
<dbReference type="GO" id="GO:0005829">
    <property type="term" value="C:cytosol"/>
    <property type="evidence" value="ECO:0007669"/>
    <property type="project" value="TreeGrafter"/>
</dbReference>
<dbReference type="GO" id="GO:0051539">
    <property type="term" value="F:4 iron, 4 sulfur cluster binding"/>
    <property type="evidence" value="ECO:0007669"/>
    <property type="project" value="UniProtKB-UniRule"/>
</dbReference>
<dbReference type="GO" id="GO:0046872">
    <property type="term" value="F:metal ion binding"/>
    <property type="evidence" value="ECO:0007669"/>
    <property type="project" value="UniProtKB-KW"/>
</dbReference>
<dbReference type="GO" id="GO:0035597">
    <property type="term" value="F:N6-isopentenyladenosine methylthiotransferase activity"/>
    <property type="evidence" value="ECO:0007669"/>
    <property type="project" value="TreeGrafter"/>
</dbReference>
<dbReference type="CDD" id="cd01335">
    <property type="entry name" value="Radical_SAM"/>
    <property type="match status" value="1"/>
</dbReference>
<dbReference type="FunFam" id="3.40.50.12160:FF:000001">
    <property type="entry name" value="tRNA-2-methylthio-N(6)-dimethylallyladenosine synthase"/>
    <property type="match status" value="1"/>
</dbReference>
<dbReference type="FunFam" id="3.80.30.20:FF:000001">
    <property type="entry name" value="tRNA-2-methylthio-N(6)-dimethylallyladenosine synthase 2"/>
    <property type="match status" value="1"/>
</dbReference>
<dbReference type="Gene3D" id="3.40.50.12160">
    <property type="entry name" value="Methylthiotransferase, N-terminal domain"/>
    <property type="match status" value="1"/>
</dbReference>
<dbReference type="Gene3D" id="3.80.30.20">
    <property type="entry name" value="tm_1862 like domain"/>
    <property type="match status" value="1"/>
</dbReference>
<dbReference type="HAMAP" id="MF_01864">
    <property type="entry name" value="tRNA_metthiotr_MiaB"/>
    <property type="match status" value="1"/>
</dbReference>
<dbReference type="InterPro" id="IPR006638">
    <property type="entry name" value="Elp3/MiaA/NifB-like_rSAM"/>
</dbReference>
<dbReference type="InterPro" id="IPR005839">
    <property type="entry name" value="Methylthiotransferase"/>
</dbReference>
<dbReference type="InterPro" id="IPR020612">
    <property type="entry name" value="Methylthiotransferase_CS"/>
</dbReference>
<dbReference type="InterPro" id="IPR013848">
    <property type="entry name" value="Methylthiotransferase_N"/>
</dbReference>
<dbReference type="InterPro" id="IPR038135">
    <property type="entry name" value="Methylthiotransferase_N_sf"/>
</dbReference>
<dbReference type="InterPro" id="IPR006463">
    <property type="entry name" value="MiaB_methiolase"/>
</dbReference>
<dbReference type="InterPro" id="IPR007197">
    <property type="entry name" value="rSAM"/>
</dbReference>
<dbReference type="InterPro" id="IPR023404">
    <property type="entry name" value="rSAM_horseshoe"/>
</dbReference>
<dbReference type="InterPro" id="IPR002792">
    <property type="entry name" value="TRAM_dom"/>
</dbReference>
<dbReference type="NCBIfam" id="TIGR01574">
    <property type="entry name" value="miaB-methiolase"/>
    <property type="match status" value="1"/>
</dbReference>
<dbReference type="NCBIfam" id="TIGR00089">
    <property type="entry name" value="MiaB/RimO family radical SAM methylthiotransferase"/>
    <property type="match status" value="1"/>
</dbReference>
<dbReference type="PANTHER" id="PTHR43020">
    <property type="entry name" value="CDK5 REGULATORY SUBUNIT-ASSOCIATED PROTEIN 1"/>
    <property type="match status" value="1"/>
</dbReference>
<dbReference type="PANTHER" id="PTHR43020:SF2">
    <property type="entry name" value="MITOCHONDRIAL TRNA METHYLTHIOTRANSFERASE CDK5RAP1"/>
    <property type="match status" value="1"/>
</dbReference>
<dbReference type="Pfam" id="PF04055">
    <property type="entry name" value="Radical_SAM"/>
    <property type="match status" value="1"/>
</dbReference>
<dbReference type="Pfam" id="PF01938">
    <property type="entry name" value="TRAM"/>
    <property type="match status" value="1"/>
</dbReference>
<dbReference type="Pfam" id="PF00919">
    <property type="entry name" value="UPF0004"/>
    <property type="match status" value="1"/>
</dbReference>
<dbReference type="SFLD" id="SFLDF00273">
    <property type="entry name" value="(dimethylallyl)adenosine_tRNA"/>
    <property type="match status" value="1"/>
</dbReference>
<dbReference type="SFLD" id="SFLDG01082">
    <property type="entry name" value="B12-binding_domain_containing"/>
    <property type="match status" value="1"/>
</dbReference>
<dbReference type="SFLD" id="SFLDS00029">
    <property type="entry name" value="Radical_SAM"/>
    <property type="match status" value="1"/>
</dbReference>
<dbReference type="SMART" id="SM00729">
    <property type="entry name" value="Elp3"/>
    <property type="match status" value="1"/>
</dbReference>
<dbReference type="SUPFAM" id="SSF102114">
    <property type="entry name" value="Radical SAM enzymes"/>
    <property type="match status" value="1"/>
</dbReference>
<dbReference type="PROSITE" id="PS51449">
    <property type="entry name" value="MTTASE_N"/>
    <property type="match status" value="1"/>
</dbReference>
<dbReference type="PROSITE" id="PS01278">
    <property type="entry name" value="MTTASE_RADICAL"/>
    <property type="match status" value="1"/>
</dbReference>
<dbReference type="PROSITE" id="PS51918">
    <property type="entry name" value="RADICAL_SAM"/>
    <property type="match status" value="1"/>
</dbReference>
<dbReference type="PROSITE" id="PS50926">
    <property type="entry name" value="TRAM"/>
    <property type="match status" value="1"/>
</dbReference>
<sequence length="439" mass="49148">MKKLYLKTHGCQMNEYDSAKMADVLKFSHGLELTEDPAVADVFLLNTCSVREKAQTKVFSELGRWRPFKEKRPHVVIGVGGCVASQEGETILKQAPFVDIVFGPQTLHRLPDLLDSVIQKRKSVVDITFPEIEKFDRLPQPRAEGPSAFVSIMEGCSKYCTFCVVPYTRGEEISRPFDDVIAEVASLCEQGVREITLLGQNVNDYRGLMHDGQVADLALLIHYLAAMDNIERIRFTTSHPSAFSENLIDAYAEEPKLANHLHLPVQSGSDRILAAMKRNYTVLEYKSKIRKLRAVRPDISLSSDFIIGFPGETDADFEATMNLIHDMGFDHSFSFIYSPRPGTPAAQLPDDVPMAVKKERLAILQNRINAKAAEISQSMVGTQQRILVTGPSKKYPDQLSGRTENNRVVNFNGDTPLIGQMVTIKIKEARPYSLWGEIC</sequence>
<evidence type="ECO:0000255" key="1">
    <source>
        <dbReference type="HAMAP-Rule" id="MF_01864"/>
    </source>
</evidence>
<evidence type="ECO:0000255" key="2">
    <source>
        <dbReference type="PROSITE-ProRule" id="PRU01266"/>
    </source>
</evidence>
<gene>
    <name evidence="1" type="primary">miaB</name>
    <name type="ordered locus">COXBURSA331_A0683</name>
</gene>
<keyword id="KW-0004">4Fe-4S</keyword>
<keyword id="KW-0963">Cytoplasm</keyword>
<keyword id="KW-0408">Iron</keyword>
<keyword id="KW-0411">Iron-sulfur</keyword>
<keyword id="KW-0479">Metal-binding</keyword>
<keyword id="KW-0949">S-adenosyl-L-methionine</keyword>
<keyword id="KW-0808">Transferase</keyword>
<keyword id="KW-0819">tRNA processing</keyword>
<name>MIAB_COXBR</name>
<feature type="chain" id="PRO_0000374248" description="tRNA-2-methylthio-N(6)-dimethylallyladenosine synthase">
    <location>
        <begin position="1"/>
        <end position="439"/>
    </location>
</feature>
<feature type="domain" description="MTTase N-terminal" evidence="1">
    <location>
        <begin position="2"/>
        <end position="119"/>
    </location>
</feature>
<feature type="domain" description="Radical SAM core" evidence="2">
    <location>
        <begin position="142"/>
        <end position="374"/>
    </location>
</feature>
<feature type="domain" description="TRAM" evidence="1">
    <location>
        <begin position="377"/>
        <end position="439"/>
    </location>
</feature>
<feature type="binding site" evidence="1">
    <location>
        <position position="11"/>
    </location>
    <ligand>
        <name>[4Fe-4S] cluster</name>
        <dbReference type="ChEBI" id="CHEBI:49883"/>
        <label>1</label>
    </ligand>
</feature>
<feature type="binding site" evidence="1">
    <location>
        <position position="48"/>
    </location>
    <ligand>
        <name>[4Fe-4S] cluster</name>
        <dbReference type="ChEBI" id="CHEBI:49883"/>
        <label>1</label>
    </ligand>
</feature>
<feature type="binding site" evidence="1">
    <location>
        <position position="82"/>
    </location>
    <ligand>
        <name>[4Fe-4S] cluster</name>
        <dbReference type="ChEBI" id="CHEBI:49883"/>
        <label>1</label>
    </ligand>
</feature>
<feature type="binding site" evidence="1">
    <location>
        <position position="156"/>
    </location>
    <ligand>
        <name>[4Fe-4S] cluster</name>
        <dbReference type="ChEBI" id="CHEBI:49883"/>
        <label>2</label>
        <note>4Fe-4S-S-AdoMet</note>
    </ligand>
</feature>
<feature type="binding site" evidence="1">
    <location>
        <position position="160"/>
    </location>
    <ligand>
        <name>[4Fe-4S] cluster</name>
        <dbReference type="ChEBI" id="CHEBI:49883"/>
        <label>2</label>
        <note>4Fe-4S-S-AdoMet</note>
    </ligand>
</feature>
<feature type="binding site" evidence="1">
    <location>
        <position position="163"/>
    </location>
    <ligand>
        <name>[4Fe-4S] cluster</name>
        <dbReference type="ChEBI" id="CHEBI:49883"/>
        <label>2</label>
        <note>4Fe-4S-S-AdoMet</note>
    </ligand>
</feature>
<accession>A9NC58</accession>
<reference key="1">
    <citation type="submission" date="2007-11" db="EMBL/GenBank/DDBJ databases">
        <title>Genome sequencing of phylogenetically and phenotypically diverse Coxiella burnetii isolates.</title>
        <authorList>
            <person name="Seshadri R."/>
            <person name="Samuel J.E."/>
        </authorList>
    </citation>
    <scope>NUCLEOTIDE SEQUENCE [LARGE SCALE GENOMIC DNA]</scope>
    <source>
        <strain>RSA 331 / Henzerling II</strain>
    </source>
</reference>
<organism>
    <name type="scientific">Coxiella burnetii (strain RSA 331 / Henzerling II)</name>
    <dbReference type="NCBI Taxonomy" id="360115"/>
    <lineage>
        <taxon>Bacteria</taxon>
        <taxon>Pseudomonadati</taxon>
        <taxon>Pseudomonadota</taxon>
        <taxon>Gammaproteobacteria</taxon>
        <taxon>Legionellales</taxon>
        <taxon>Coxiellaceae</taxon>
        <taxon>Coxiella</taxon>
    </lineage>
</organism>
<protein>
    <recommendedName>
        <fullName evidence="1">tRNA-2-methylthio-N(6)-dimethylallyladenosine synthase</fullName>
        <ecNumber evidence="1">2.8.4.3</ecNumber>
    </recommendedName>
    <alternativeName>
        <fullName evidence="1">(Dimethylallyl)adenosine tRNA methylthiotransferase MiaB</fullName>
    </alternativeName>
    <alternativeName>
        <fullName evidence="1">tRNA-i(6)A37 methylthiotransferase</fullName>
    </alternativeName>
</protein>
<proteinExistence type="inferred from homology"/>